<name>TORL5_ARATH</name>
<organism>
    <name type="scientific">Arabidopsis thaliana</name>
    <name type="common">Mouse-ear cress</name>
    <dbReference type="NCBI Taxonomy" id="3702"/>
    <lineage>
        <taxon>Eukaryota</taxon>
        <taxon>Viridiplantae</taxon>
        <taxon>Streptophyta</taxon>
        <taxon>Embryophyta</taxon>
        <taxon>Tracheophyta</taxon>
        <taxon>Spermatophyta</taxon>
        <taxon>Magnoliopsida</taxon>
        <taxon>eudicotyledons</taxon>
        <taxon>Gunneridae</taxon>
        <taxon>Pentapetalae</taxon>
        <taxon>rosids</taxon>
        <taxon>malvids</taxon>
        <taxon>Brassicales</taxon>
        <taxon>Brassicaceae</taxon>
        <taxon>Camelineae</taxon>
        <taxon>Arabidopsis</taxon>
    </lineage>
</organism>
<gene>
    <name evidence="3" type="primary">TOR1L5</name>
    <name evidence="4" type="ordered locus">At1g59850</name>
    <name evidence="5" type="ORF">F23H11.17</name>
</gene>
<protein>
    <recommendedName>
        <fullName evidence="3">TORTIFOLIA1-like protein 5</fullName>
    </recommendedName>
</protein>
<reference key="1">
    <citation type="journal article" date="2000" name="Nature">
        <title>Sequence and analysis of chromosome 1 of the plant Arabidopsis thaliana.</title>
        <authorList>
            <person name="Theologis A."/>
            <person name="Ecker J.R."/>
            <person name="Palm C.J."/>
            <person name="Federspiel N.A."/>
            <person name="Kaul S."/>
            <person name="White O."/>
            <person name="Alonso J."/>
            <person name="Altafi H."/>
            <person name="Araujo R."/>
            <person name="Bowman C.L."/>
            <person name="Brooks S.Y."/>
            <person name="Buehler E."/>
            <person name="Chan A."/>
            <person name="Chao Q."/>
            <person name="Chen H."/>
            <person name="Cheuk R.F."/>
            <person name="Chin C.W."/>
            <person name="Chung M.K."/>
            <person name="Conn L."/>
            <person name="Conway A.B."/>
            <person name="Conway A.R."/>
            <person name="Creasy T.H."/>
            <person name="Dewar K."/>
            <person name="Dunn P."/>
            <person name="Etgu P."/>
            <person name="Feldblyum T.V."/>
            <person name="Feng J.-D."/>
            <person name="Fong B."/>
            <person name="Fujii C.Y."/>
            <person name="Gill J.E."/>
            <person name="Goldsmith A.D."/>
            <person name="Haas B."/>
            <person name="Hansen N.F."/>
            <person name="Hughes B."/>
            <person name="Huizar L."/>
            <person name="Hunter J.L."/>
            <person name="Jenkins J."/>
            <person name="Johnson-Hopson C."/>
            <person name="Khan S."/>
            <person name="Khaykin E."/>
            <person name="Kim C.J."/>
            <person name="Koo H.L."/>
            <person name="Kremenetskaia I."/>
            <person name="Kurtz D.B."/>
            <person name="Kwan A."/>
            <person name="Lam B."/>
            <person name="Langin-Hooper S."/>
            <person name="Lee A."/>
            <person name="Lee J.M."/>
            <person name="Lenz C.A."/>
            <person name="Li J.H."/>
            <person name="Li Y.-P."/>
            <person name="Lin X."/>
            <person name="Liu S.X."/>
            <person name="Liu Z.A."/>
            <person name="Luros J.S."/>
            <person name="Maiti R."/>
            <person name="Marziali A."/>
            <person name="Militscher J."/>
            <person name="Miranda M."/>
            <person name="Nguyen M."/>
            <person name="Nierman W.C."/>
            <person name="Osborne B.I."/>
            <person name="Pai G."/>
            <person name="Peterson J."/>
            <person name="Pham P.K."/>
            <person name="Rizzo M."/>
            <person name="Rooney T."/>
            <person name="Rowley D."/>
            <person name="Sakano H."/>
            <person name="Salzberg S.L."/>
            <person name="Schwartz J.R."/>
            <person name="Shinn P."/>
            <person name="Southwick A.M."/>
            <person name="Sun H."/>
            <person name="Tallon L.J."/>
            <person name="Tambunga G."/>
            <person name="Toriumi M.J."/>
            <person name="Town C.D."/>
            <person name="Utterback T."/>
            <person name="Van Aken S."/>
            <person name="Vaysberg M."/>
            <person name="Vysotskaia V.S."/>
            <person name="Walker M."/>
            <person name="Wu D."/>
            <person name="Yu G."/>
            <person name="Fraser C.M."/>
            <person name="Venter J.C."/>
            <person name="Davis R.W."/>
        </authorList>
    </citation>
    <scope>NUCLEOTIDE SEQUENCE [LARGE SCALE GENOMIC DNA]</scope>
    <source>
        <strain>cv. Columbia</strain>
    </source>
</reference>
<reference key="2">
    <citation type="journal article" date="2017" name="Plant J.">
        <title>Araport11: a complete reannotation of the Arabidopsis thaliana reference genome.</title>
        <authorList>
            <person name="Cheng C.Y."/>
            <person name="Krishnakumar V."/>
            <person name="Chan A.P."/>
            <person name="Thibaud-Nissen F."/>
            <person name="Schobel S."/>
            <person name="Town C.D."/>
        </authorList>
    </citation>
    <scope>GENOME REANNOTATION</scope>
    <source>
        <strain>cv. Columbia</strain>
    </source>
</reference>
<reference key="3">
    <citation type="journal article" date="2004" name="Curr. Biol.">
        <title>Helical growth of the Arabidopsis mutant tortifolia1 reveals a plant-specific microtubule-associated protein.</title>
        <authorList>
            <person name="Buschmann H."/>
            <person name="Fabri C.O."/>
            <person name="Hauptmann M."/>
            <person name="Hutzler P."/>
            <person name="Laux T."/>
            <person name="Lloyd C.W."/>
            <person name="Schaeffner A.R."/>
        </authorList>
    </citation>
    <scope>GENE FAMILY</scope>
</reference>
<reference key="4">
    <citation type="journal article" date="2004" name="Plant Physiol.">
        <title>Plant-specific microtubule-associated protein SPIRAL2 is required for anisotropic growth in Arabidopsis.</title>
        <authorList>
            <person name="Shoji T."/>
            <person name="Narita N.N."/>
            <person name="Hayashi K."/>
            <person name="Asada J."/>
            <person name="Hamada T."/>
            <person name="Sonobe S."/>
            <person name="Nakajima K."/>
            <person name="Hashimoto T."/>
        </authorList>
    </citation>
    <scope>GENE FAMILY</scope>
</reference>
<reference key="5">
    <citation type="journal article" date="2009" name="J. Proteomics">
        <title>Phosphoproteomic analysis of nuclei-enriched fractions from Arabidopsis thaliana.</title>
        <authorList>
            <person name="Jones A.M.E."/>
            <person name="MacLean D."/>
            <person name="Studholme D.J."/>
            <person name="Serna-Sanz A."/>
            <person name="Andreasson E."/>
            <person name="Rathjen J.P."/>
            <person name="Peck S.C."/>
        </authorList>
    </citation>
    <scope>PHOSPHORYLATION [LARGE SCALE ANALYSIS] AT SER-426</scope>
    <scope>IDENTIFICATION BY MASS SPECTROMETRY [LARGE SCALE ANALYSIS]</scope>
    <source>
        <strain>cv. Columbia</strain>
    </source>
</reference>
<evidence type="ECO:0000255" key="1"/>
<evidence type="ECO:0000256" key="2">
    <source>
        <dbReference type="SAM" id="MobiDB-lite"/>
    </source>
</evidence>
<evidence type="ECO:0000303" key="3">
    <source>
    </source>
</evidence>
<evidence type="ECO:0000312" key="4">
    <source>
        <dbReference type="Araport" id="AT1G59850"/>
    </source>
</evidence>
<evidence type="ECO:0000312" key="5">
    <source>
        <dbReference type="EMBL" id="AAD39327.1"/>
    </source>
</evidence>
<evidence type="ECO:0007744" key="6">
    <source>
    </source>
</evidence>
<keyword id="KW-0597">Phosphoprotein</keyword>
<keyword id="KW-1185">Reference proteome</keyword>
<keyword id="KW-0677">Repeat</keyword>
<sequence>MPSVQIRSSPSHSQPAMTVTDLKQRVIACLNRLSDRDTLALAAAELDSIALNLSPETFSLFINCLQSTDSSAKSPVRKHCVSLLSVLSRSHGDSLAPHLSKMVSTVLRRLRDPDSSVRAACVAASVDMTTNITGQPFSILFGPMIETVIHDCDPNAQISAAMCLAAAVDAADEPDVEQLQKALPKIGKLLKSEGFKAKAELLGAIGTVIGAVGGRNSEKAVLDWLLPNVSEFLSSDDWRARKAAAEAMARVAMVEEELAPLYKKTCLGILESRRFDKVKLVRETMNRTLGLWKQLEGDSTEVSESSSSSKSASSGLSATSGKRSNTLKGKDRNLNTPLSSKSNDVEPLDRGDTPKDVEQEAVVSKEKRNRSTLGAKRVLFPAKMHKVKENGSNKSQVVQSSDEESPKTDSGSSSSSQAKSNAEELSLIRHQITQIEKQQSSLLDLFQKFMESSHNGMQSLERRVRGLETSFSVISTDLLVSRSITQNGNHKRNACRQN</sequence>
<accession>Q9XIE4</accession>
<proteinExistence type="evidence at protein level"/>
<feature type="chain" id="PRO_0000438408" description="TORTIFOLIA1-like protein 5">
    <location>
        <begin position="1"/>
        <end position="498"/>
    </location>
</feature>
<feature type="repeat" description="HEAT 1" evidence="1">
    <location>
        <begin position="56"/>
        <end position="93"/>
    </location>
</feature>
<feature type="repeat" description="HEAT 2" evidence="1">
    <location>
        <begin position="97"/>
        <end position="134"/>
    </location>
</feature>
<feature type="repeat" description="HEAT 3" evidence="1">
    <location>
        <begin position="136"/>
        <end position="173"/>
    </location>
</feature>
<feature type="repeat" description="HEAT 4" evidence="1">
    <location>
        <begin position="177"/>
        <end position="214"/>
    </location>
</feature>
<feature type="repeat" description="HEAT 5" evidence="1">
    <location>
        <begin position="219"/>
        <end position="257"/>
    </location>
</feature>
<feature type="region of interest" description="Disordered" evidence="2">
    <location>
        <begin position="296"/>
        <end position="423"/>
    </location>
</feature>
<feature type="compositionally biased region" description="Low complexity" evidence="2">
    <location>
        <begin position="300"/>
        <end position="322"/>
    </location>
</feature>
<feature type="compositionally biased region" description="Basic and acidic residues" evidence="2">
    <location>
        <begin position="343"/>
        <end position="366"/>
    </location>
</feature>
<feature type="compositionally biased region" description="Polar residues" evidence="2">
    <location>
        <begin position="390"/>
        <end position="400"/>
    </location>
</feature>
<feature type="modified residue" description="Phosphoserine" evidence="6">
    <location>
        <position position="426"/>
    </location>
</feature>
<dbReference type="EMBL" id="AC007258">
    <property type="protein sequence ID" value="AAD39327.1"/>
    <property type="molecule type" value="Genomic_DNA"/>
</dbReference>
<dbReference type="EMBL" id="CP002684">
    <property type="protein sequence ID" value="AEE33628.1"/>
    <property type="molecule type" value="Genomic_DNA"/>
</dbReference>
<dbReference type="PIR" id="F96622">
    <property type="entry name" value="F96622"/>
</dbReference>
<dbReference type="RefSeq" id="NP_176194.1">
    <property type="nucleotide sequence ID" value="NM_104678.2"/>
</dbReference>
<dbReference type="SMR" id="Q9XIE4"/>
<dbReference type="STRING" id="3702.Q9XIE4"/>
<dbReference type="iPTMnet" id="Q9XIE4"/>
<dbReference type="PaxDb" id="3702-AT1G59850.1"/>
<dbReference type="EnsemblPlants" id="AT1G59850.1">
    <property type="protein sequence ID" value="AT1G59850.1"/>
    <property type="gene ID" value="AT1G59850"/>
</dbReference>
<dbReference type="GeneID" id="842279"/>
<dbReference type="Gramene" id="AT1G59850.1">
    <property type="protein sequence ID" value="AT1G59850.1"/>
    <property type="gene ID" value="AT1G59850"/>
</dbReference>
<dbReference type="KEGG" id="ath:AT1G59850"/>
<dbReference type="Araport" id="AT1G59850"/>
<dbReference type="TAIR" id="AT1G59850"/>
<dbReference type="eggNOG" id="ENOG502QQTY">
    <property type="taxonomic scope" value="Eukaryota"/>
</dbReference>
<dbReference type="HOGENOM" id="CLU_025475_0_0_1"/>
<dbReference type="InParanoid" id="Q9XIE4"/>
<dbReference type="OMA" id="DDWRARK"/>
<dbReference type="OrthoDB" id="1904066at2759"/>
<dbReference type="PhylomeDB" id="Q9XIE4"/>
<dbReference type="PRO" id="PR:Q9XIE4"/>
<dbReference type="Proteomes" id="UP000006548">
    <property type="component" value="Chromosome 1"/>
</dbReference>
<dbReference type="ExpressionAtlas" id="Q9XIE4">
    <property type="expression patterns" value="baseline and differential"/>
</dbReference>
<dbReference type="GO" id="GO:0005874">
    <property type="term" value="C:microtubule"/>
    <property type="evidence" value="ECO:0007669"/>
    <property type="project" value="InterPro"/>
</dbReference>
<dbReference type="GO" id="GO:0008017">
    <property type="term" value="F:microtubule binding"/>
    <property type="evidence" value="ECO:0007669"/>
    <property type="project" value="InterPro"/>
</dbReference>
<dbReference type="FunFam" id="1.25.10.10:FF:000549">
    <property type="entry name" value="ARM repeat superfamily protein"/>
    <property type="match status" value="1"/>
</dbReference>
<dbReference type="Gene3D" id="1.25.10.10">
    <property type="entry name" value="Leucine-rich Repeat Variant"/>
    <property type="match status" value="1"/>
</dbReference>
<dbReference type="InterPro" id="IPR011989">
    <property type="entry name" value="ARM-like"/>
</dbReference>
<dbReference type="InterPro" id="IPR016024">
    <property type="entry name" value="ARM-type_fold"/>
</dbReference>
<dbReference type="InterPro" id="IPR033337">
    <property type="entry name" value="TORTIFOLIA1/SINE1-2"/>
</dbReference>
<dbReference type="PANTHER" id="PTHR31355">
    <property type="entry name" value="MICROTUBULE-ASSOCIATED PROTEIN TORTIFOLIA1"/>
    <property type="match status" value="1"/>
</dbReference>
<dbReference type="PANTHER" id="PTHR31355:SF19">
    <property type="entry name" value="TORTIFOLIA1-LIKE PROTEIN 5"/>
    <property type="match status" value="1"/>
</dbReference>
<dbReference type="Pfam" id="PF24714">
    <property type="entry name" value="TOR1L1_N"/>
    <property type="match status" value="1"/>
</dbReference>
<dbReference type="SUPFAM" id="SSF48371">
    <property type="entry name" value="ARM repeat"/>
    <property type="match status" value="1"/>
</dbReference>